<comment type="function">
    <text evidence="1">This protein binds to 23S rRNA in the presence of protein L20.</text>
</comment>
<comment type="subunit">
    <text evidence="1">Part of the 50S ribosomal subunit. Contacts protein L20.</text>
</comment>
<comment type="similarity">
    <text evidence="1">Belongs to the bacterial ribosomal protein bL21 family.</text>
</comment>
<organism>
    <name type="scientific">Vibrio harveyi</name>
    <name type="common">Beneckea harveyi</name>
    <dbReference type="NCBI Taxonomy" id="669"/>
    <lineage>
        <taxon>Bacteria</taxon>
        <taxon>Pseudomonadati</taxon>
        <taxon>Pseudomonadota</taxon>
        <taxon>Gammaproteobacteria</taxon>
        <taxon>Vibrionales</taxon>
        <taxon>Vibrionaceae</taxon>
        <taxon>Vibrio</taxon>
    </lineage>
</organism>
<dbReference type="EMBL" id="DQ180600">
    <property type="protein sequence ID" value="ABA26912.1"/>
    <property type="molecule type" value="Genomic_DNA"/>
</dbReference>
<dbReference type="RefSeq" id="WP_000271393.1">
    <property type="nucleotide sequence ID" value="NZ_UAVF01000001.1"/>
</dbReference>
<dbReference type="SMR" id="Q3LT96"/>
<dbReference type="STRING" id="669.AL538_11155"/>
<dbReference type="GeneID" id="95679033"/>
<dbReference type="OrthoDB" id="9813334at2"/>
<dbReference type="GO" id="GO:0005737">
    <property type="term" value="C:cytoplasm"/>
    <property type="evidence" value="ECO:0007669"/>
    <property type="project" value="UniProtKB-ARBA"/>
</dbReference>
<dbReference type="GO" id="GO:1990904">
    <property type="term" value="C:ribonucleoprotein complex"/>
    <property type="evidence" value="ECO:0007669"/>
    <property type="project" value="UniProtKB-KW"/>
</dbReference>
<dbReference type="GO" id="GO:0005840">
    <property type="term" value="C:ribosome"/>
    <property type="evidence" value="ECO:0007669"/>
    <property type="project" value="UniProtKB-KW"/>
</dbReference>
<dbReference type="GO" id="GO:0019843">
    <property type="term" value="F:rRNA binding"/>
    <property type="evidence" value="ECO:0007669"/>
    <property type="project" value="UniProtKB-UniRule"/>
</dbReference>
<dbReference type="GO" id="GO:0003735">
    <property type="term" value="F:structural constituent of ribosome"/>
    <property type="evidence" value="ECO:0007669"/>
    <property type="project" value="InterPro"/>
</dbReference>
<dbReference type="GO" id="GO:0006412">
    <property type="term" value="P:translation"/>
    <property type="evidence" value="ECO:0007669"/>
    <property type="project" value="UniProtKB-UniRule"/>
</dbReference>
<dbReference type="HAMAP" id="MF_01363">
    <property type="entry name" value="Ribosomal_bL21"/>
    <property type="match status" value="1"/>
</dbReference>
<dbReference type="InterPro" id="IPR028909">
    <property type="entry name" value="bL21-like"/>
</dbReference>
<dbReference type="InterPro" id="IPR036164">
    <property type="entry name" value="bL21-like_sf"/>
</dbReference>
<dbReference type="InterPro" id="IPR001787">
    <property type="entry name" value="Ribosomal_bL21"/>
</dbReference>
<dbReference type="InterPro" id="IPR018258">
    <property type="entry name" value="Ribosomal_bL21_CS"/>
</dbReference>
<dbReference type="NCBIfam" id="TIGR00061">
    <property type="entry name" value="L21"/>
    <property type="match status" value="1"/>
</dbReference>
<dbReference type="PANTHER" id="PTHR21349">
    <property type="entry name" value="50S RIBOSOMAL PROTEIN L21"/>
    <property type="match status" value="1"/>
</dbReference>
<dbReference type="PANTHER" id="PTHR21349:SF0">
    <property type="entry name" value="LARGE RIBOSOMAL SUBUNIT PROTEIN BL21M"/>
    <property type="match status" value="1"/>
</dbReference>
<dbReference type="Pfam" id="PF00829">
    <property type="entry name" value="Ribosomal_L21p"/>
    <property type="match status" value="1"/>
</dbReference>
<dbReference type="SUPFAM" id="SSF141091">
    <property type="entry name" value="L21p-like"/>
    <property type="match status" value="1"/>
</dbReference>
<dbReference type="PROSITE" id="PS01169">
    <property type="entry name" value="RIBOSOMAL_L21"/>
    <property type="match status" value="1"/>
</dbReference>
<sequence>MYAVFQSGGKQHRVSEGQTLRLEKLDVETGATVEFDKVLLVANGEDIKVGAPLVEGGKVVAEVVQHGRGDKVKIVKFRRRKHSRKQQGHRQWFTEVKITGINA</sequence>
<evidence type="ECO:0000255" key="1">
    <source>
        <dbReference type="HAMAP-Rule" id="MF_01363"/>
    </source>
</evidence>
<evidence type="ECO:0000305" key="2"/>
<reference key="1">
    <citation type="submission" date="2005-08" db="EMBL/GenBank/DDBJ databases">
        <title>The Vibrio harveyi cgtAV gene is essential, ribosome-associated and displays rapid guanine nucleotide exchange rates in vitro.</title>
        <authorList>
            <person name="Sikora A.E."/>
            <person name="Datta K."/>
            <person name="Zielke R.A."/>
            <person name="Maddock J.R."/>
        </authorList>
    </citation>
    <scope>NUCLEOTIDE SEQUENCE [GENOMIC DNA]</scope>
</reference>
<protein>
    <recommendedName>
        <fullName evidence="1">Large ribosomal subunit protein bL21</fullName>
    </recommendedName>
    <alternativeName>
        <fullName evidence="2">50S ribosomal protein L21</fullName>
    </alternativeName>
</protein>
<accession>Q3LT96</accession>
<keyword id="KW-0687">Ribonucleoprotein</keyword>
<keyword id="KW-0689">Ribosomal protein</keyword>
<keyword id="KW-0694">RNA-binding</keyword>
<keyword id="KW-0699">rRNA-binding</keyword>
<gene>
    <name evidence="1" type="primary">rplU</name>
</gene>
<name>RL21_VIBHA</name>
<proteinExistence type="inferred from homology"/>
<feature type="chain" id="PRO_0000269422" description="Large ribosomal subunit protein bL21">
    <location>
        <begin position="1"/>
        <end position="103"/>
    </location>
</feature>